<reference key="1">
    <citation type="journal article" date="1986" name="Virology">
        <title>Nucleotide sequence and genetic map of the 16-kb vaccinia virus HindIII D fragment.</title>
        <authorList>
            <person name="Niles E.G."/>
            <person name="Condit R.C."/>
            <person name="Caro P."/>
            <person name="Davidson K."/>
            <person name="Matusick L."/>
            <person name="Seto J."/>
        </authorList>
    </citation>
    <scope>NUCLEOTIDE SEQUENCE [GENOMIC DNA]</scope>
</reference>
<reference key="2">
    <citation type="journal article" date="1986" name="Nucleic Acids Res.">
        <title>A tandemly-oriented late gene cluster within the vaccinia virus genome.</title>
        <authorList>
            <person name="Weinrich S.L."/>
            <person name="Hruby D.E."/>
        </authorList>
    </citation>
    <scope>NUCLEOTIDE SEQUENCE [GENOMIC DNA]</scope>
</reference>
<reference key="3">
    <citation type="submission" date="2003-02" db="EMBL/GenBank/DDBJ databases">
        <title>Sequencing of the coding region of Vaccinia-WR to an average 9-fold redundancy and an error rate of 0.16/10kb.</title>
        <authorList>
            <person name="Esposito J.J."/>
            <person name="Frace A.M."/>
            <person name="Sammons S.A."/>
            <person name="Olsen-Rasmussen M."/>
            <person name="Osborne J."/>
            <person name="Wohlhueter R."/>
        </authorList>
    </citation>
    <scope>NUCLEOTIDE SEQUENCE [LARGE SCALE GENOMIC DNA]</scope>
</reference>
<reference key="4">
    <citation type="journal article" date="1989" name="Virology">
        <title>Vaccinia virus gene D12L encodes the small subunit of the viral mRNA capping enzyme.</title>
        <authorList>
            <person name="Niles E.G."/>
            <person name="Lee-Chen G.-J."/>
            <person name="Shuman S."/>
            <person name="Moss B."/>
            <person name="Broyles S.S."/>
        </authorList>
    </citation>
    <scope>FUNCTION</scope>
</reference>
<reference key="5">
    <citation type="journal article" date="1990" name="Proc. Natl. Acad. Sci. U.S.A.">
        <title>Interaction and mutual stabilization of the two subunits of vaccinia virus mRNA capping enzyme coexpressed in Escherichia coli.</title>
        <authorList>
            <person name="Guo P."/>
            <person name="Moss B."/>
        </authorList>
    </citation>
    <scope>INTERACTION WITH LARGE SUBUNIT</scope>
</reference>
<reference key="6">
    <citation type="journal article" date="1991" name="J. Virol.">
        <title>A temperature-sensitive lesion in the small subunit of the vaccinia virus-encoded mRNA-capping enzyme causes a defect in viral telomere resolution.</title>
        <authorList>
            <person name="Carpenter M.S."/>
            <person name="DeLange A.M."/>
        </authorList>
    </citation>
    <scope>MUTAGENESIS OF PRO-23</scope>
</reference>
<reference key="7">
    <citation type="journal article" date="2008" name="Virology">
        <title>Phenotypic analysis of a temperature sensitive mutant in the large subunit of the vaccinia virus mRNA capping enzyme.</title>
        <authorList>
            <person name="Shatzer A.N."/>
            <person name="Kato S.E."/>
            <person name="Condit R.C."/>
        </authorList>
    </citation>
    <scope>FUNCTION</scope>
    <source>
        <strain>IHDW</strain>
        <strain>mutant Dts36</strain>
    </source>
</reference>
<reference key="8">
    <citation type="journal article" date="2008" name="Virology">
        <title>Vaccinia virus early gene transcription termination factors VTF and Rap94 interact with the U9 termination motif in the nascent RNA in a transcription ternary complex.</title>
        <authorList>
            <person name="Christen L.A."/>
            <person name="Piacente S."/>
            <person name="Mohamed M.R."/>
            <person name="Niles E.G."/>
        </authorList>
    </citation>
    <scope>FUNCTION</scope>
</reference>
<reference key="9">
    <citation type="journal article" date="2007" name="EMBO J.">
        <title>Structural insights into the mechanism and evolution of the vaccinia virus mRNA cap N7 methyl-transferase.</title>
        <authorList>
            <person name="De la Pena M."/>
            <person name="Kyrieleis O.J."/>
            <person name="Cusack S."/>
        </authorList>
    </citation>
    <scope>X-RAY CRYSTALLOGRAPHY (2.7 ANGSTROMS) IN COMPLEX WITH ADOHCY AND THE CATALYTIC SUBUNIT OPG113</scope>
</reference>
<dbReference type="EMBL" id="M15058">
    <property type="protein sequence ID" value="AAA48270.1"/>
    <property type="molecule type" value="Genomic_DNA"/>
</dbReference>
<dbReference type="EMBL" id="X03729">
    <property type="protein sequence ID" value="CAA27369.1"/>
    <property type="molecule type" value="Genomic_DNA"/>
</dbReference>
<dbReference type="EMBL" id="AY243312">
    <property type="protein sequence ID" value="AAO89396.1"/>
    <property type="molecule type" value="Genomic_DNA"/>
</dbReference>
<dbReference type="PIR" id="A03892">
    <property type="entry name" value="QQVZ22"/>
</dbReference>
<dbReference type="RefSeq" id="YP_232999.1">
    <property type="nucleotide sequence ID" value="NC_006998.1"/>
</dbReference>
<dbReference type="PDB" id="2VDW">
    <property type="method" value="X-ray"/>
    <property type="resolution" value="2.70 A"/>
    <property type="chains" value="B/D/F/H=1-287"/>
</dbReference>
<dbReference type="PDB" id="4CKB">
    <property type="method" value="X-ray"/>
    <property type="resolution" value="2.80 A"/>
    <property type="chains" value="B/E=1-287"/>
</dbReference>
<dbReference type="PDB" id="4CKC">
    <property type="method" value="X-ray"/>
    <property type="resolution" value="2.90 A"/>
    <property type="chains" value="B/E=1-287"/>
</dbReference>
<dbReference type="PDB" id="4CKE">
    <property type="method" value="X-ray"/>
    <property type="resolution" value="2.90 A"/>
    <property type="chains" value="B/E=1-287"/>
</dbReference>
<dbReference type="PDB" id="6RIE">
    <property type="method" value="EM"/>
    <property type="resolution" value="3.10 A"/>
    <property type="chains" value="L=1-287"/>
</dbReference>
<dbReference type="PDBsum" id="2VDW"/>
<dbReference type="PDBsum" id="4CKB"/>
<dbReference type="PDBsum" id="4CKC"/>
<dbReference type="PDBsum" id="4CKE"/>
<dbReference type="PDBsum" id="6RIE"/>
<dbReference type="SMR" id="P04318"/>
<dbReference type="DIP" id="DIP-60665N"/>
<dbReference type="IntAct" id="P04318">
    <property type="interactions" value="1"/>
</dbReference>
<dbReference type="DNASU" id="3707515"/>
<dbReference type="GeneID" id="3707515"/>
<dbReference type="KEGG" id="vg:3707515"/>
<dbReference type="EvolutionaryTrace" id="P04318"/>
<dbReference type="Proteomes" id="UP000000344">
    <property type="component" value="Genome"/>
</dbReference>
<dbReference type="GO" id="GO:0044423">
    <property type="term" value="C:virion component"/>
    <property type="evidence" value="ECO:0007669"/>
    <property type="project" value="UniProtKB-KW"/>
</dbReference>
<dbReference type="GO" id="GO:0004482">
    <property type="term" value="F:mRNA 5'-cap (guanine-N7-)-methyltransferase activity"/>
    <property type="evidence" value="ECO:0007669"/>
    <property type="project" value="InterPro"/>
</dbReference>
<dbReference type="GO" id="GO:0006353">
    <property type="term" value="P:DNA-templated transcription termination"/>
    <property type="evidence" value="ECO:0007669"/>
    <property type="project" value="UniProtKB-KW"/>
</dbReference>
<dbReference type="Gene3D" id="3.40.50.11680">
    <property type="entry name" value="Poxvirus mRNA capping enzyme, small subunit"/>
    <property type="match status" value="1"/>
</dbReference>
<dbReference type="InterPro" id="IPR005009">
    <property type="entry name" value="Poxvirus_mRNA-cap_ssu"/>
</dbReference>
<dbReference type="InterPro" id="IPR043096">
    <property type="entry name" value="Poxvirus_mRNA-cap_ssu_sf"/>
</dbReference>
<dbReference type="Pfam" id="PF03341">
    <property type="entry name" value="Pox_mRNA-cap"/>
    <property type="match status" value="1"/>
</dbReference>
<organismHost>
    <name type="scientific">Bos taurus</name>
    <name type="common">Bovine</name>
    <dbReference type="NCBI Taxonomy" id="9913"/>
</organismHost>
<organism>
    <name type="scientific">Vaccinia virus (strain Western Reserve)</name>
    <name type="common">VACV</name>
    <name type="synonym">Vaccinia virus (strain WR)</name>
    <dbReference type="NCBI Taxonomy" id="10254"/>
    <lineage>
        <taxon>Viruses</taxon>
        <taxon>Varidnaviria</taxon>
        <taxon>Bamfordvirae</taxon>
        <taxon>Nucleocytoviricota</taxon>
        <taxon>Pokkesviricetes</taxon>
        <taxon>Chitovirales</taxon>
        <taxon>Poxviridae</taxon>
        <taxon>Chordopoxvirinae</taxon>
        <taxon>Orthopoxvirus</taxon>
        <taxon>Vaccinia virus</taxon>
    </lineage>
</organism>
<feature type="chain" id="PRO_0000210137" description="mRNA-capping enzyme regulatory subunit OPG124">
    <location>
        <begin position="1"/>
        <end position="287"/>
    </location>
</feature>
<feature type="mutagenesis site" description="In ts9383; conditional lethal mutant defective in the ability to convert the replicated form of the viral telomere to hairpin termini." evidence="1">
    <original>P</original>
    <variation>S</variation>
    <location>
        <position position="23"/>
    </location>
</feature>
<feature type="sequence conflict" description="In Ref. 2; CAA27369." evidence="6" ref="2">
    <original>K</original>
    <variation>N</variation>
    <location>
        <position position="134"/>
    </location>
</feature>
<feature type="helix" evidence="7">
    <location>
        <begin position="3"/>
        <end position="10"/>
    </location>
</feature>
<feature type="strand" evidence="7">
    <location>
        <begin position="12"/>
        <end position="15"/>
    </location>
</feature>
<feature type="strand" evidence="7">
    <location>
        <begin position="28"/>
        <end position="30"/>
    </location>
</feature>
<feature type="turn" evidence="7">
    <location>
        <begin position="37"/>
        <end position="40"/>
    </location>
</feature>
<feature type="helix" evidence="7">
    <location>
        <begin position="43"/>
        <end position="46"/>
    </location>
</feature>
<feature type="helix" evidence="7">
    <location>
        <begin position="48"/>
        <end position="54"/>
    </location>
</feature>
<feature type="helix" evidence="7">
    <location>
        <begin position="58"/>
        <end position="65"/>
    </location>
</feature>
<feature type="helix" evidence="7">
    <location>
        <begin position="66"/>
        <end position="68"/>
    </location>
</feature>
<feature type="helix" evidence="7">
    <location>
        <begin position="74"/>
        <end position="81"/>
    </location>
</feature>
<feature type="strand" evidence="7">
    <location>
        <begin position="87"/>
        <end position="90"/>
    </location>
</feature>
<feature type="strand" evidence="9">
    <location>
        <begin position="92"/>
        <end position="94"/>
    </location>
</feature>
<feature type="strand" evidence="7">
    <location>
        <begin position="97"/>
        <end position="102"/>
    </location>
</feature>
<feature type="strand" evidence="7">
    <location>
        <begin position="110"/>
        <end position="112"/>
    </location>
</feature>
<feature type="strand" evidence="7">
    <location>
        <begin position="128"/>
        <end position="131"/>
    </location>
</feature>
<feature type="helix" evidence="7">
    <location>
        <begin position="133"/>
        <end position="135"/>
    </location>
</feature>
<feature type="helix" evidence="7">
    <location>
        <begin position="138"/>
        <end position="141"/>
    </location>
</feature>
<feature type="helix" evidence="7">
    <location>
        <begin position="142"/>
        <end position="146"/>
    </location>
</feature>
<feature type="strand" evidence="7">
    <location>
        <begin position="151"/>
        <end position="158"/>
    </location>
</feature>
<feature type="helix" evidence="7">
    <location>
        <begin position="163"/>
        <end position="175"/>
    </location>
</feature>
<feature type="strand" evidence="7">
    <location>
        <begin position="176"/>
        <end position="183"/>
    </location>
</feature>
<feature type="strand" evidence="9">
    <location>
        <begin position="185"/>
        <end position="187"/>
    </location>
</feature>
<feature type="strand" evidence="7">
    <location>
        <begin position="189"/>
        <end position="191"/>
    </location>
</feature>
<feature type="strand" evidence="7">
    <location>
        <begin position="194"/>
        <end position="201"/>
    </location>
</feature>
<feature type="helix" evidence="7">
    <location>
        <begin position="203"/>
        <end position="217"/>
    </location>
</feature>
<feature type="helix" evidence="7">
    <location>
        <begin position="224"/>
        <end position="226"/>
    </location>
</feature>
<feature type="strand" evidence="8">
    <location>
        <begin position="230"/>
        <end position="235"/>
    </location>
</feature>
<feature type="helix" evidence="7">
    <location>
        <begin position="239"/>
        <end position="268"/>
    </location>
</feature>
<feature type="strand" evidence="7">
    <location>
        <begin position="273"/>
        <end position="276"/>
    </location>
</feature>
<feature type="helix" evidence="7">
    <location>
        <begin position="277"/>
        <end position="283"/>
    </location>
</feature>
<comment type="function">
    <text evidence="3 4 5">Regulatory subunit of the mRNA cap enzyme which stabilizes the catalytic subunit and enhances its methyltransferase activity through an allosteric mechanism. Heterodimeric mRNA capping enzyme catalyzes the linkage of a N7-methyl-guanosine moiety to the first transcribed nucleotide (cap 0 structure), whereas the methyltransferase OPG102 is responsible for a second methylation at the 2'-O position of the ribose (cap 1 structure). Also involved in early viral gene transcription termination and intermediate viral gene transcription initiation. Early gene transcription termination requires the termination factor VTF, the DNA-dependent ATPase NPH-I/OPG123 and the RAP94/OPG109 subunit of the viral RNA polymerase, as well as the presence of a specific termination motif. Binds, together with RAP94/OPG109, to the termination motif 5'-UUUUUNU-3' in the nascent early mRNA.</text>
</comment>
<comment type="subunit">
    <text evidence="2">Interacts with the catalytic subunit OPG113.</text>
</comment>
<comment type="interaction">
    <interactant intactId="EBI-16095776">
        <id>P04318</id>
    </interactant>
    <interactant intactId="EBI-16095746">
        <id>P04298</id>
        <label>OPG113</label>
    </interactant>
    <organismsDiffer>false</organismsDiffer>
    <experiments>3</experiments>
</comment>
<comment type="subcellular location">
    <subcellularLocation>
        <location evidence="6">Virion</location>
    </subcellularLocation>
    <text>All the enzymes and other proteins required to synthesize early mRNAs are packaged within the virion core along with the DNA genome.</text>
</comment>
<comment type="similarity">
    <text evidence="6">Belongs to the orthopoxvirus mRNA-capping enzyme regulatory subunit family.</text>
</comment>
<accession>P04318</accession>
<accession>Q76ZR5</accession>
<evidence type="ECO:0000269" key="1">
    <source>
    </source>
</evidence>
<evidence type="ECO:0000269" key="2">
    <source>
    </source>
</evidence>
<evidence type="ECO:0000269" key="3">
    <source>
    </source>
</evidence>
<evidence type="ECO:0000269" key="4">
    <source>
    </source>
</evidence>
<evidence type="ECO:0000269" key="5">
    <source>
    </source>
</evidence>
<evidence type="ECO:0000305" key="6"/>
<evidence type="ECO:0007829" key="7">
    <source>
        <dbReference type="PDB" id="2VDW"/>
    </source>
</evidence>
<evidence type="ECO:0007829" key="8">
    <source>
        <dbReference type="PDB" id="4CKB"/>
    </source>
</evidence>
<evidence type="ECO:0007829" key="9">
    <source>
        <dbReference type="PDB" id="6RIE"/>
    </source>
</evidence>
<sequence>MDEIVKNIREGTHVLLPFYETLPELNLSLGKSPLPSLEYGANYFLQISRVNDLNRMPTDMLKLFTHDIMLPESDLDKVYEILKINSVKYYGRSTKADAVVADLSARNKLFKRERDAIKSNNHLTENNLYISDYKMLTFDVFRPLFDFVNEKYCIIKLPTLFGRGVIDTMRIYCSLFKNVRLLKCVSDSWLKDSAIMVASDVCKKNLDLFMSHVKSVTKSSSWKDVNSVQFSILNNPVDTEFINKFLEFSNRVYEALYYVHSLLYSSMTSDSKSIENKHQRRLVKLLL</sequence>
<gene>
    <name type="primary">OPG124</name>
    <name type="ordered locus">VACWR117</name>
    <name type="ORF">D12L</name>
</gene>
<protein>
    <recommendedName>
        <fullName>mRNA-capping enzyme regulatory subunit OPG124</fullName>
    </recommendedName>
    <alternativeName>
        <fullName>Virus termination factor small subunit</fullName>
        <shortName>VTF small subunit</shortName>
    </alternativeName>
    <alternativeName>
        <fullName>mRNA-capping enzyme 33 kDa subunit</fullName>
    </alternativeName>
    <alternativeName>
        <fullName>mRNA-capping enzyme D12 subunit</fullName>
    </alternativeName>
    <alternativeName>
        <fullName>mRNA-capping enzyme small subunit</fullName>
    </alternativeName>
</protein>
<name>MCES_VACCW</name>
<proteinExistence type="evidence at protein level"/>
<keyword id="KW-0002">3D-structure</keyword>
<keyword id="KW-0506">mRNA capping</keyword>
<keyword id="KW-0507">mRNA processing</keyword>
<keyword id="KW-1185">Reference proteome</keyword>
<keyword id="KW-0804">Transcription</keyword>
<keyword id="KW-0805">Transcription regulation</keyword>
<keyword id="KW-0806">Transcription termination</keyword>
<keyword id="KW-0946">Virion</keyword>